<feature type="chain" id="PRO_0000233641" description="Cytochrome b559 subunit beta">
    <location>
        <begin position="1"/>
        <end position="39"/>
    </location>
</feature>
<feature type="transmembrane region" description="Helical" evidence="1">
    <location>
        <begin position="14"/>
        <end position="30"/>
    </location>
</feature>
<feature type="binding site" description="axial binding residue" evidence="1">
    <location>
        <position position="18"/>
    </location>
    <ligand>
        <name>heme</name>
        <dbReference type="ChEBI" id="CHEBI:30413"/>
        <note>ligand shared with alpha subunit</note>
    </ligand>
    <ligandPart>
        <name>Fe</name>
        <dbReference type="ChEBI" id="CHEBI:18248"/>
    </ligandPart>
</feature>
<proteinExistence type="inferred from homology"/>
<sequence length="39" mass="4424">MTIDRTYPIFTVRWLAVHGLAVPTVSFLGSISAMQFIQR</sequence>
<dbReference type="EMBL" id="DQ345959">
    <property type="protein sequence ID" value="ABC73644.1"/>
    <property type="molecule type" value="Genomic_DNA"/>
</dbReference>
<dbReference type="RefSeq" id="YP_538951.1">
    <property type="nucleotide sequence ID" value="NC_007944.1"/>
</dbReference>
<dbReference type="SMR" id="Q2L918"/>
<dbReference type="GeneID" id="3989165"/>
<dbReference type="KEGG" id="ghi:3989165"/>
<dbReference type="OrthoDB" id="3664at41938"/>
<dbReference type="Proteomes" id="UP000189702">
    <property type="component" value="Chloroplast Pltd"/>
</dbReference>
<dbReference type="GO" id="GO:0009535">
    <property type="term" value="C:chloroplast thylakoid membrane"/>
    <property type="evidence" value="ECO:0007669"/>
    <property type="project" value="UniProtKB-SubCell"/>
</dbReference>
<dbReference type="GO" id="GO:0009539">
    <property type="term" value="C:photosystem II reaction center"/>
    <property type="evidence" value="ECO:0007669"/>
    <property type="project" value="InterPro"/>
</dbReference>
<dbReference type="GO" id="GO:0009055">
    <property type="term" value="F:electron transfer activity"/>
    <property type="evidence" value="ECO:0007669"/>
    <property type="project" value="UniProtKB-UniRule"/>
</dbReference>
<dbReference type="GO" id="GO:0020037">
    <property type="term" value="F:heme binding"/>
    <property type="evidence" value="ECO:0007669"/>
    <property type="project" value="InterPro"/>
</dbReference>
<dbReference type="GO" id="GO:0005506">
    <property type="term" value="F:iron ion binding"/>
    <property type="evidence" value="ECO:0007669"/>
    <property type="project" value="UniProtKB-UniRule"/>
</dbReference>
<dbReference type="GO" id="GO:0009767">
    <property type="term" value="P:photosynthetic electron transport chain"/>
    <property type="evidence" value="ECO:0007669"/>
    <property type="project" value="InterPro"/>
</dbReference>
<dbReference type="HAMAP" id="MF_00643">
    <property type="entry name" value="PSII_PsbF"/>
    <property type="match status" value="1"/>
</dbReference>
<dbReference type="InterPro" id="IPR006241">
    <property type="entry name" value="PSII_cyt_b559_bsu"/>
</dbReference>
<dbReference type="InterPro" id="IPR006216">
    <property type="entry name" value="PSII_cyt_b559_CS"/>
</dbReference>
<dbReference type="InterPro" id="IPR013081">
    <property type="entry name" value="PSII_cyt_b559_N"/>
</dbReference>
<dbReference type="NCBIfam" id="TIGR01333">
    <property type="entry name" value="cyt_b559_beta"/>
    <property type="match status" value="1"/>
</dbReference>
<dbReference type="Pfam" id="PF00283">
    <property type="entry name" value="Cytochrom_B559"/>
    <property type="match status" value="1"/>
</dbReference>
<dbReference type="PIRSF" id="PIRSF000037">
    <property type="entry name" value="PsbF"/>
    <property type="match status" value="1"/>
</dbReference>
<dbReference type="SUPFAM" id="SSF161045">
    <property type="entry name" value="Cytochrome b559 subunits"/>
    <property type="match status" value="1"/>
</dbReference>
<dbReference type="PROSITE" id="PS00537">
    <property type="entry name" value="CYTOCHROME_B559"/>
    <property type="match status" value="1"/>
</dbReference>
<reference key="1">
    <citation type="journal article" date="2006" name="BMC Genomics">
        <title>The complete chloroplast genome sequence of Gossypium hirsutum: organization and phylogenetic relationships to other angiosperms.</title>
        <authorList>
            <person name="Lee S.-B."/>
            <person name="Kaittanis C."/>
            <person name="Jansen R.K."/>
            <person name="Hostetler J.B."/>
            <person name="Tallon L.J."/>
            <person name="Town C.D."/>
            <person name="Daniell H."/>
        </authorList>
    </citation>
    <scope>NUCLEOTIDE SEQUENCE [LARGE SCALE GENOMIC DNA]</scope>
    <source>
        <strain>cv. Coker 310FR</strain>
    </source>
</reference>
<geneLocation type="chloroplast"/>
<evidence type="ECO:0000255" key="1">
    <source>
        <dbReference type="HAMAP-Rule" id="MF_00643"/>
    </source>
</evidence>
<organism>
    <name type="scientific">Gossypium hirsutum</name>
    <name type="common">Upland cotton</name>
    <name type="synonym">Gossypium mexicanum</name>
    <dbReference type="NCBI Taxonomy" id="3635"/>
    <lineage>
        <taxon>Eukaryota</taxon>
        <taxon>Viridiplantae</taxon>
        <taxon>Streptophyta</taxon>
        <taxon>Embryophyta</taxon>
        <taxon>Tracheophyta</taxon>
        <taxon>Spermatophyta</taxon>
        <taxon>Magnoliopsida</taxon>
        <taxon>eudicotyledons</taxon>
        <taxon>Gunneridae</taxon>
        <taxon>Pentapetalae</taxon>
        <taxon>rosids</taxon>
        <taxon>malvids</taxon>
        <taxon>Malvales</taxon>
        <taxon>Malvaceae</taxon>
        <taxon>Malvoideae</taxon>
        <taxon>Gossypium</taxon>
    </lineage>
</organism>
<keyword id="KW-0150">Chloroplast</keyword>
<keyword id="KW-0249">Electron transport</keyword>
<keyword id="KW-0349">Heme</keyword>
<keyword id="KW-0408">Iron</keyword>
<keyword id="KW-0472">Membrane</keyword>
<keyword id="KW-0479">Metal-binding</keyword>
<keyword id="KW-0602">Photosynthesis</keyword>
<keyword id="KW-0604">Photosystem II</keyword>
<keyword id="KW-0934">Plastid</keyword>
<keyword id="KW-1185">Reference proteome</keyword>
<keyword id="KW-0793">Thylakoid</keyword>
<keyword id="KW-0812">Transmembrane</keyword>
<keyword id="KW-1133">Transmembrane helix</keyword>
<keyword id="KW-0813">Transport</keyword>
<accession>Q2L918</accession>
<name>PSBF_GOSHI</name>
<comment type="function">
    <text evidence="1">This b-type cytochrome is tightly associated with the reaction center of photosystem II (PSII). PSII is a light-driven water:plastoquinone oxidoreductase that uses light energy to abstract electrons from H(2)O, generating O(2) and a proton gradient subsequently used for ATP formation. It consists of a core antenna complex that captures photons, and an electron transfer chain that converts photonic excitation into a charge separation.</text>
</comment>
<comment type="cofactor">
    <cofactor evidence="1">
        <name>heme b</name>
        <dbReference type="ChEBI" id="CHEBI:60344"/>
    </cofactor>
    <text evidence="1">With its partner (PsbE) binds heme. PSII binds additional chlorophylls, carotenoids and specific lipids.</text>
</comment>
<comment type="subunit">
    <text evidence="1">Heterodimer of an alpha subunit and a beta subunit. PSII is composed of 1 copy each of membrane proteins PsbA, PsbB, PsbC, PsbD, PsbE, PsbF, PsbH, PsbI, PsbJ, PsbK, PsbL, PsbM, PsbT, PsbX, PsbY, PsbZ, Psb30/Ycf12, at least 3 peripheral proteins of the oxygen-evolving complex and a large number of cofactors. It forms dimeric complexes.</text>
</comment>
<comment type="subcellular location">
    <subcellularLocation>
        <location evidence="1">Plastid</location>
        <location evidence="1">Chloroplast thylakoid membrane</location>
        <topology evidence="1">Single-pass membrane protein</topology>
    </subcellularLocation>
</comment>
<comment type="similarity">
    <text evidence="1">Belongs to the PsbE/PsbF family.</text>
</comment>
<gene>
    <name evidence="1" type="primary">psbF</name>
</gene>
<protein>
    <recommendedName>
        <fullName evidence="1">Cytochrome b559 subunit beta</fullName>
    </recommendedName>
    <alternativeName>
        <fullName evidence="1">PSII reaction center subunit VI</fullName>
    </alternativeName>
</protein>